<organism>
    <name type="scientific">Synechococcus elongatus</name>
    <dbReference type="NCBI Taxonomy" id="32046"/>
    <lineage>
        <taxon>Bacteria</taxon>
        <taxon>Bacillati</taxon>
        <taxon>Cyanobacteriota</taxon>
        <taxon>Cyanophyceae</taxon>
        <taxon>Synechococcales</taxon>
        <taxon>Synechococcaceae</taxon>
        <taxon>Synechococcus</taxon>
    </lineage>
</organism>
<comment type="function">
    <text evidence="1">Component of the cytochrome b6-f complex, which mediates electron transfer between photosystem II (PSII) and photosystem I (PSI), cyclic electron flow around PSI, and state transitions.</text>
</comment>
<comment type="cofactor">
    <cofactor evidence="1">
        <name>heme b</name>
        <dbReference type="ChEBI" id="CHEBI:60344"/>
    </cofactor>
    <text evidence="1">Binds 2 heme b groups non-covalently with two histidine residues as axial ligands.</text>
</comment>
<comment type="cofactor">
    <cofactor evidence="1">
        <name>heme c</name>
        <dbReference type="ChEBI" id="CHEBI:61717"/>
    </cofactor>
    <text evidence="1">Binds one heme group covalently by a single cysteine link with no axial amino acid ligand. This heme was named heme ci.</text>
</comment>
<comment type="subunit">
    <text evidence="1">The 4 large subunits of the cytochrome b6-f complex are cytochrome b6, subunit IV (17 kDa polypeptide, PetD), cytochrome f and the Rieske protein, while the 4 small subunits are PetG, PetL, PetM and PetN. The complex functions as a dimer.</text>
</comment>
<comment type="subcellular location">
    <subcellularLocation>
        <location evidence="1">Cellular thylakoid membrane</location>
        <topology evidence="1">Multi-pass membrane protein</topology>
    </subcellularLocation>
</comment>
<comment type="miscellaneous">
    <text evidence="1">Heme 1 (or BH or b566) is high-potential and absorbs at about 566 nm, and heme 2 (or BL or b562) is low-potential and absorbs at about 562 nm.</text>
</comment>
<comment type="similarity">
    <text evidence="1">Belongs to the cytochrome b family. PetB subfamily.</text>
</comment>
<feature type="chain" id="PRO_0000061833" description="Cytochrome b6">
    <location>
        <begin position="1"/>
        <end position="215"/>
    </location>
</feature>
<feature type="transmembrane region" description="Helical" evidence="1">
    <location>
        <begin position="32"/>
        <end position="52"/>
    </location>
</feature>
<feature type="transmembrane region" description="Helical" evidence="1">
    <location>
        <begin position="90"/>
        <end position="110"/>
    </location>
</feature>
<feature type="transmembrane region" description="Helical" evidence="1">
    <location>
        <begin position="116"/>
        <end position="136"/>
    </location>
</feature>
<feature type="transmembrane region" description="Helical" evidence="1">
    <location>
        <begin position="186"/>
        <end position="206"/>
    </location>
</feature>
<feature type="binding site" description="covalent" evidence="1">
    <location>
        <position position="35"/>
    </location>
    <ligand>
        <name>heme c</name>
        <dbReference type="ChEBI" id="CHEBI:61717"/>
    </ligand>
</feature>
<feature type="binding site" description="axial binding residue" evidence="1">
    <location>
        <position position="86"/>
    </location>
    <ligand>
        <name>heme b</name>
        <dbReference type="ChEBI" id="CHEBI:60344"/>
        <label>2</label>
    </ligand>
    <ligandPart>
        <name>Fe</name>
        <dbReference type="ChEBI" id="CHEBI:18248"/>
    </ligandPart>
</feature>
<feature type="binding site" description="axial binding residue" evidence="1">
    <location>
        <position position="100"/>
    </location>
    <ligand>
        <name>heme b</name>
        <dbReference type="ChEBI" id="CHEBI:60344"/>
        <label>1</label>
    </ligand>
    <ligandPart>
        <name>Fe</name>
        <dbReference type="ChEBI" id="CHEBI:18248"/>
    </ligandPart>
</feature>
<feature type="binding site" description="axial binding residue" evidence="1">
    <location>
        <position position="187"/>
    </location>
    <ligand>
        <name>heme b</name>
        <dbReference type="ChEBI" id="CHEBI:60344"/>
        <label>2</label>
    </ligand>
    <ligandPart>
        <name>Fe</name>
        <dbReference type="ChEBI" id="CHEBI:18248"/>
    </ligandPart>
</feature>
<feature type="binding site" description="axial binding residue" evidence="1">
    <location>
        <position position="202"/>
    </location>
    <ligand>
        <name>heme b</name>
        <dbReference type="ChEBI" id="CHEBI:60344"/>
        <label>1</label>
    </ligand>
    <ligandPart>
        <name>Fe</name>
        <dbReference type="ChEBI" id="CHEBI:18248"/>
    </ligandPart>
</feature>
<proteinExistence type="inferred from homology"/>
<sequence>MNKVYDWFEERLEIQAIADDITSKYVPPHVNIFYCLGGITLTCFLIQFATGFAMTFYYKPTVAEAFASVQYIMNEVNFGWLIRSIHKWSASMMVLMMILHVFRVYLTGGFKKPRELTWVTGVVLAVITVSFGVTGYSLPWDQVGYWAVKIVSGIPAAIPVVGDQLVELMRGGESVGQATLTRFYSLHTFVLPWSIAVFMLMHFLMIRKQGISGPL</sequence>
<dbReference type="EMBL" id="AJ243707">
    <property type="protein sequence ID" value="CAB46749.1"/>
    <property type="molecule type" value="Genomic_DNA"/>
</dbReference>
<dbReference type="SMR" id="P0C8M6"/>
<dbReference type="GO" id="GO:0031676">
    <property type="term" value="C:plasma membrane-derived thylakoid membrane"/>
    <property type="evidence" value="ECO:0007669"/>
    <property type="project" value="UniProtKB-SubCell"/>
</dbReference>
<dbReference type="GO" id="GO:0045158">
    <property type="term" value="F:electron transporter, transferring electrons within cytochrome b6/f complex of photosystem II activity"/>
    <property type="evidence" value="ECO:0007669"/>
    <property type="project" value="UniProtKB-UniRule"/>
</dbReference>
<dbReference type="GO" id="GO:0046872">
    <property type="term" value="F:metal ion binding"/>
    <property type="evidence" value="ECO:0007669"/>
    <property type="project" value="UniProtKB-KW"/>
</dbReference>
<dbReference type="GO" id="GO:0016491">
    <property type="term" value="F:oxidoreductase activity"/>
    <property type="evidence" value="ECO:0007669"/>
    <property type="project" value="InterPro"/>
</dbReference>
<dbReference type="GO" id="GO:0015979">
    <property type="term" value="P:photosynthesis"/>
    <property type="evidence" value="ECO:0007669"/>
    <property type="project" value="UniProtKB-UniRule"/>
</dbReference>
<dbReference type="GO" id="GO:0022904">
    <property type="term" value="P:respiratory electron transport chain"/>
    <property type="evidence" value="ECO:0007669"/>
    <property type="project" value="InterPro"/>
</dbReference>
<dbReference type="CDD" id="cd00284">
    <property type="entry name" value="Cytochrome_b_N"/>
    <property type="match status" value="1"/>
</dbReference>
<dbReference type="FunFam" id="1.20.810.10:FF:000001">
    <property type="entry name" value="Cytochrome b6"/>
    <property type="match status" value="1"/>
</dbReference>
<dbReference type="Gene3D" id="1.20.810.10">
    <property type="entry name" value="Cytochrome Bc1 Complex, Chain C"/>
    <property type="match status" value="1"/>
</dbReference>
<dbReference type="HAMAP" id="MF_00633">
    <property type="entry name" value="Cytb6_f_cytb6"/>
    <property type="match status" value="1"/>
</dbReference>
<dbReference type="InterPro" id="IPR005797">
    <property type="entry name" value="Cyt_b/b6_N"/>
</dbReference>
<dbReference type="InterPro" id="IPR023530">
    <property type="entry name" value="Cyt_B6_PetB"/>
</dbReference>
<dbReference type="InterPro" id="IPR027387">
    <property type="entry name" value="Cytb/b6-like_sf"/>
</dbReference>
<dbReference type="InterPro" id="IPR048259">
    <property type="entry name" value="Cytochrome_b_N_euk/bac"/>
</dbReference>
<dbReference type="InterPro" id="IPR016174">
    <property type="entry name" value="Di-haem_cyt_TM"/>
</dbReference>
<dbReference type="NCBIfam" id="NF002990">
    <property type="entry name" value="PRK03735.1"/>
    <property type="match status" value="1"/>
</dbReference>
<dbReference type="PANTHER" id="PTHR19271">
    <property type="entry name" value="CYTOCHROME B"/>
    <property type="match status" value="1"/>
</dbReference>
<dbReference type="PANTHER" id="PTHR19271:SF16">
    <property type="entry name" value="CYTOCHROME B"/>
    <property type="match status" value="1"/>
</dbReference>
<dbReference type="Pfam" id="PF00033">
    <property type="entry name" value="Cytochrome_B"/>
    <property type="match status" value="1"/>
</dbReference>
<dbReference type="PIRSF" id="PIRSF000032">
    <property type="entry name" value="Cytochrome_b6"/>
    <property type="match status" value="1"/>
</dbReference>
<dbReference type="SUPFAM" id="SSF81342">
    <property type="entry name" value="Transmembrane di-heme cytochromes"/>
    <property type="match status" value="1"/>
</dbReference>
<dbReference type="PROSITE" id="PS51002">
    <property type="entry name" value="CYTB_NTER"/>
    <property type="match status" value="1"/>
</dbReference>
<accession>P0C8M6</accession>
<accession>Q9X9S9</accession>
<reference key="1">
    <citation type="journal article" date="2000" name="Biochim. Biophys. Acta">
        <title>Sequence of the two operons encoding the four core subunits of the cytochrome b6f complex from the thermophilic cyanobacterium Synechococcus elongatus.</title>
        <authorList>
            <person name="Schneider D."/>
            <person name="Altenfeld U."/>
            <person name="Thomas H."/>
            <person name="Schrader S."/>
            <person name="Muehlenhoff U."/>
            <person name="Roegner M."/>
        </authorList>
    </citation>
    <scope>NUCLEOTIDE SEQUENCE [GENOMIC DNA]</scope>
</reference>
<protein>
    <recommendedName>
        <fullName evidence="1">Cytochrome b6</fullName>
    </recommendedName>
</protein>
<keyword id="KW-0249">Electron transport</keyword>
<keyword id="KW-0349">Heme</keyword>
<keyword id="KW-0408">Iron</keyword>
<keyword id="KW-0472">Membrane</keyword>
<keyword id="KW-0479">Metal-binding</keyword>
<keyword id="KW-0602">Photosynthesis</keyword>
<keyword id="KW-0793">Thylakoid</keyword>
<keyword id="KW-0812">Transmembrane</keyword>
<keyword id="KW-1133">Transmembrane helix</keyword>
<keyword id="KW-0813">Transport</keyword>
<evidence type="ECO:0000255" key="1">
    <source>
        <dbReference type="HAMAP-Rule" id="MF_00633"/>
    </source>
</evidence>
<gene>
    <name evidence="1" type="primary">petB</name>
</gene>
<name>CYB6_SYNEL</name>